<evidence type="ECO:0000250" key="1">
    <source>
        <dbReference type="UniProtKB" id="Q6VVX2"/>
    </source>
</evidence>
<evidence type="ECO:0000250" key="2">
    <source>
        <dbReference type="UniProtKB" id="Q9Y5P4"/>
    </source>
</evidence>
<evidence type="ECO:0000255" key="3"/>
<evidence type="ECO:0000255" key="4">
    <source>
        <dbReference type="PROSITE-ProRule" id="PRU00145"/>
    </source>
</evidence>
<evidence type="ECO:0000255" key="5">
    <source>
        <dbReference type="PROSITE-ProRule" id="PRU00197"/>
    </source>
</evidence>
<evidence type="ECO:0000256" key="6">
    <source>
        <dbReference type="SAM" id="MobiDB-lite"/>
    </source>
</evidence>
<evidence type="ECO:0000305" key="7"/>
<reference key="1">
    <citation type="submission" date="2004-05" db="EMBL/GenBank/DDBJ databases">
        <authorList>
            <consortium name="NIH - Xenopus Gene Collection (XGC) project"/>
        </authorList>
    </citation>
    <scope>NUCLEOTIDE SEQUENCE [LARGE SCALE MRNA]</scope>
    <source>
        <tissue>Liver</tissue>
    </source>
</reference>
<protein>
    <recommendedName>
        <fullName evidence="7">Ceramide transfer protein</fullName>
        <shortName>CERT</shortName>
    </recommendedName>
    <alternativeName>
        <fullName>Collagen type IV alpha-3-binding protein</fullName>
    </alternativeName>
</protein>
<accession>Q6NRZ4</accession>
<dbReference type="EMBL" id="BC070560">
    <property type="protein sequence ID" value="AAH70560.1"/>
    <property type="molecule type" value="mRNA"/>
</dbReference>
<dbReference type="RefSeq" id="NP_001084949.1">
    <property type="nucleotide sequence ID" value="NM_001091480.1"/>
</dbReference>
<dbReference type="SMR" id="Q6NRZ4"/>
<dbReference type="DNASU" id="432007"/>
<dbReference type="GeneID" id="432007"/>
<dbReference type="KEGG" id="xla:432007"/>
<dbReference type="AGR" id="Xenbase:XB-GENE-1002420"/>
<dbReference type="CTD" id="432007"/>
<dbReference type="Xenbase" id="XB-GENE-1002420">
    <property type="gene designation" value="cert1.L"/>
</dbReference>
<dbReference type="OMA" id="KIEEQXP"/>
<dbReference type="OrthoDB" id="2344588at2759"/>
<dbReference type="Proteomes" id="UP000186698">
    <property type="component" value="Chromosome 1L"/>
</dbReference>
<dbReference type="Bgee" id="432007">
    <property type="expression patterns" value="Expressed in testis and 19 other cell types or tissues"/>
</dbReference>
<dbReference type="GO" id="GO:0005783">
    <property type="term" value="C:endoplasmic reticulum"/>
    <property type="evidence" value="ECO:0007669"/>
    <property type="project" value="UniProtKB-SubCell"/>
</dbReference>
<dbReference type="GO" id="GO:0005794">
    <property type="term" value="C:Golgi apparatus"/>
    <property type="evidence" value="ECO:0007669"/>
    <property type="project" value="UniProtKB-SubCell"/>
</dbReference>
<dbReference type="GO" id="GO:0008289">
    <property type="term" value="F:lipid binding"/>
    <property type="evidence" value="ECO:0007669"/>
    <property type="project" value="InterPro"/>
</dbReference>
<dbReference type="GO" id="GO:0035621">
    <property type="term" value="P:ER to Golgi ceramide transport"/>
    <property type="evidence" value="ECO:0000318"/>
    <property type="project" value="GO_Central"/>
</dbReference>
<dbReference type="CDD" id="cd13283">
    <property type="entry name" value="PH_GPBP"/>
    <property type="match status" value="1"/>
</dbReference>
<dbReference type="CDD" id="cd08872">
    <property type="entry name" value="START_STARD11-like"/>
    <property type="match status" value="1"/>
</dbReference>
<dbReference type="FunFam" id="2.30.29.30:FF:000104">
    <property type="entry name" value="collagen type IV alpha-3-binding protein-like isoform X2"/>
    <property type="match status" value="1"/>
</dbReference>
<dbReference type="FunFam" id="3.30.530.20:FF:000003">
    <property type="entry name" value="Collagen type IV alpha-3-binding protein-like protein"/>
    <property type="match status" value="1"/>
</dbReference>
<dbReference type="Gene3D" id="3.30.530.20">
    <property type="match status" value="1"/>
</dbReference>
<dbReference type="Gene3D" id="2.30.29.30">
    <property type="entry name" value="Pleckstrin-homology domain (PH domain)/Phosphotyrosine-binding domain (PTB)"/>
    <property type="match status" value="1"/>
</dbReference>
<dbReference type="InterPro" id="IPR011993">
    <property type="entry name" value="PH-like_dom_sf"/>
</dbReference>
<dbReference type="InterPro" id="IPR001849">
    <property type="entry name" value="PH_domain"/>
</dbReference>
<dbReference type="InterPro" id="IPR041952">
    <property type="entry name" value="STARD11_START"/>
</dbReference>
<dbReference type="InterPro" id="IPR023393">
    <property type="entry name" value="START-like_dom_sf"/>
</dbReference>
<dbReference type="InterPro" id="IPR002913">
    <property type="entry name" value="START_lipid-bd_dom"/>
</dbReference>
<dbReference type="InterPro" id="IPR051213">
    <property type="entry name" value="START_lipid_transfer"/>
</dbReference>
<dbReference type="PANTHER" id="PTHR19308:SF53">
    <property type="entry name" value="CERAMIDE TRANSFER PROTEIN"/>
    <property type="match status" value="1"/>
</dbReference>
<dbReference type="PANTHER" id="PTHR19308">
    <property type="entry name" value="PHOSPHATIDYLCHOLINE TRANSFER PROTEIN"/>
    <property type="match status" value="1"/>
</dbReference>
<dbReference type="Pfam" id="PF00169">
    <property type="entry name" value="PH"/>
    <property type="match status" value="1"/>
</dbReference>
<dbReference type="Pfam" id="PF01852">
    <property type="entry name" value="START"/>
    <property type="match status" value="1"/>
</dbReference>
<dbReference type="SMART" id="SM00233">
    <property type="entry name" value="PH"/>
    <property type="match status" value="1"/>
</dbReference>
<dbReference type="SMART" id="SM00234">
    <property type="entry name" value="START"/>
    <property type="match status" value="1"/>
</dbReference>
<dbReference type="SUPFAM" id="SSF55961">
    <property type="entry name" value="Bet v1-like"/>
    <property type="match status" value="1"/>
</dbReference>
<dbReference type="SUPFAM" id="SSF50729">
    <property type="entry name" value="PH domain-like"/>
    <property type="match status" value="1"/>
</dbReference>
<dbReference type="PROSITE" id="PS50003">
    <property type="entry name" value="PH_DOMAIN"/>
    <property type="match status" value="1"/>
</dbReference>
<dbReference type="PROSITE" id="PS50848">
    <property type="entry name" value="START"/>
    <property type="match status" value="1"/>
</dbReference>
<keyword id="KW-0175">Coiled coil</keyword>
<keyword id="KW-0963">Cytoplasm</keyword>
<keyword id="KW-0256">Endoplasmic reticulum</keyword>
<keyword id="KW-0333">Golgi apparatus</keyword>
<keyword id="KW-0445">Lipid transport</keyword>
<keyword id="KW-1185">Reference proteome</keyword>
<keyword id="KW-0813">Transport</keyword>
<comment type="function">
    <text evidence="2">May mediate the intracellular trafficking of ceramide in a non-vesicular manner.</text>
</comment>
<comment type="catalytic activity">
    <reaction evidence="1">
        <text>N-hexadecanoylsphing-4-enine(in) = N-hexadecanoylsphing-4-enine(out)</text>
        <dbReference type="Rhea" id="RHEA:45720"/>
        <dbReference type="ChEBI" id="CHEBI:72959"/>
    </reaction>
</comment>
<comment type="subcellular location">
    <subcellularLocation>
        <location evidence="2">Cytoplasm</location>
    </subcellularLocation>
    <subcellularLocation>
        <location evidence="2">Golgi apparatus</location>
    </subcellularLocation>
    <subcellularLocation>
        <location evidence="2">Endoplasmic reticulum</location>
    </subcellularLocation>
</comment>
<comment type="domain">
    <text evidence="2">The START domain recognizes ceramide and mediates the intermembrane transfer of ceramide.</text>
</comment>
<comment type="domain">
    <text evidence="2">The PH domain targets the Golgi apparatus.</text>
</comment>
<name>CERT_XENLA</name>
<sequence length="617" mass="70333">MSDNQSWNSSGSEEDLEPESGPPVERCGVLSKWTNYIHGWQDRWVDLKNNTLSYYKSEDETEYGCRGSICLSKAVITPHEFDECRFDISVNDSVWYIRAQDPDHRQRWIDSIEQHKSESGYGSESSLRRHGSMVSLVSGASSYSATSTSSFKKGHSLREKLAEMETFRDILCRQVDTLQKYFDACAGAVSKDELERDKVEDDEDDFLHNHPNEDYIHSNNGNKEKLFQHVTPKCIDGIDFKGEAITFKATTAGILATLSHCIELMVKREDSWQKRLDKEIEKRRRVEEAYKNAMTELKKKSHFGGPDYEEGPNSLINEEEFFDAVEAALDRQDKIELCQSEKGRSHWPPSPPSSEAHTAAGSHRLVQAPPSCPPPTDLVSSSDEHRFRIQVEDMVQNHMTYSLQDVGGDANWQLVVEEGEMKVYRREVEENGIVLDPLKATHSVKGVTGHEVCQYFWNVDVRNDWETTIENFHVVEKLSPNAIIVYQTHKRVWPASQRDVLYLSAIRVVPAASENEMDTWIVCNFSVDHDKAPLNRCVRAKINIAMICQTLVSPPEGNKEISRDNIQCKITYVANVNPGGWAPASVLRAVAKREYPKFLKRFTSYVQEKTADKPILF</sequence>
<organism>
    <name type="scientific">Xenopus laevis</name>
    <name type="common">African clawed frog</name>
    <dbReference type="NCBI Taxonomy" id="8355"/>
    <lineage>
        <taxon>Eukaryota</taxon>
        <taxon>Metazoa</taxon>
        <taxon>Chordata</taxon>
        <taxon>Craniata</taxon>
        <taxon>Vertebrata</taxon>
        <taxon>Euteleostomi</taxon>
        <taxon>Amphibia</taxon>
        <taxon>Batrachia</taxon>
        <taxon>Anura</taxon>
        <taxon>Pipoidea</taxon>
        <taxon>Pipidae</taxon>
        <taxon>Xenopodinae</taxon>
        <taxon>Xenopus</taxon>
        <taxon>Xenopus</taxon>
    </lineage>
</organism>
<feature type="chain" id="PRO_0000307357" description="Ceramide transfer protein">
    <location>
        <begin position="1"/>
        <end position="617"/>
    </location>
</feature>
<feature type="domain" description="PH" evidence="4">
    <location>
        <begin position="23"/>
        <end position="117"/>
    </location>
</feature>
<feature type="domain" description="START" evidence="5">
    <location>
        <begin position="383"/>
        <end position="611"/>
    </location>
</feature>
<feature type="region of interest" description="Disordered" evidence="6">
    <location>
        <begin position="1"/>
        <end position="23"/>
    </location>
</feature>
<feature type="region of interest" description="Disordered" evidence="6">
    <location>
        <begin position="341"/>
        <end position="382"/>
    </location>
</feature>
<feature type="coiled-coil region" evidence="3">
    <location>
        <begin position="268"/>
        <end position="302"/>
    </location>
</feature>
<feature type="short sequence motif" description="FFAT" evidence="2">
    <location>
        <begin position="320"/>
        <end position="326"/>
    </location>
</feature>
<feature type="compositionally biased region" description="Polar residues" evidence="6">
    <location>
        <begin position="1"/>
        <end position="11"/>
    </location>
</feature>
<feature type="binding site" evidence="2">
    <location>
        <position position="466"/>
    </location>
    <ligand>
        <name>an N-acylsphing-4-enine</name>
        <dbReference type="ChEBI" id="CHEBI:52639"/>
    </ligand>
</feature>
<feature type="binding site" evidence="2">
    <location>
        <position position="487"/>
    </location>
    <ligand>
        <name>an N-acylsphing-4-enine</name>
        <dbReference type="ChEBI" id="CHEBI:52639"/>
    </ligand>
</feature>
<feature type="binding site" evidence="2">
    <location>
        <position position="524"/>
    </location>
    <ligand>
        <name>an N-acylsphing-4-enine</name>
        <dbReference type="ChEBI" id="CHEBI:52639"/>
    </ligand>
</feature>
<feature type="binding site" evidence="2">
    <location>
        <position position="572"/>
    </location>
    <ligand>
        <name>an N-acylsphing-4-enine</name>
        <dbReference type="ChEBI" id="CHEBI:52639"/>
    </ligand>
</feature>
<proteinExistence type="evidence at transcript level"/>
<gene>
    <name type="primary">cert1</name>
    <name type="synonym">cert</name>
    <name type="synonym">col4a3bp</name>
</gene>